<protein>
    <recommendedName>
        <fullName evidence="3">Magainin-BM2</fullName>
    </recommendedName>
</protein>
<proteinExistence type="evidence at protein level"/>
<organism evidence="3">
    <name type="scientific">Xenopus boumbaensis</name>
    <name type="common">Mawa clawed frog</name>
    <dbReference type="NCBI Taxonomy" id="288550"/>
    <lineage>
        <taxon>Eukaryota</taxon>
        <taxon>Metazoa</taxon>
        <taxon>Chordata</taxon>
        <taxon>Craniata</taxon>
        <taxon>Vertebrata</taxon>
        <taxon>Euteleostomi</taxon>
        <taxon>Amphibia</taxon>
        <taxon>Batrachia</taxon>
        <taxon>Anura</taxon>
        <taxon>Pipoidea</taxon>
        <taxon>Pipidae</taxon>
        <taxon>Xenopodinae</taxon>
        <taxon>Xenopus</taxon>
        <taxon>Xenopus</taxon>
    </lineage>
</organism>
<reference evidence="4" key="1">
    <citation type="journal article" date="2015" name="Peptides">
        <title>Host-defense and trefoil factor family peptides in skin secretions of the Mawa clawed frog Xenopus boumbaensis (Pipidae).</title>
        <authorList>
            <person name="Conlon J.M."/>
            <person name="Mechkarska M."/>
            <person name="Kolodziejek J."/>
            <person name="Leprince J."/>
            <person name="Coquet L."/>
            <person name="Jouenne T."/>
            <person name="Vaudry H."/>
            <person name="Nowotny N."/>
            <person name="King J.D."/>
        </authorList>
    </citation>
    <scope>PROTEIN SEQUENCE</scope>
    <scope>SUBCELLULAR LOCATION</scope>
    <scope>MASS SPECTROMETRY</scope>
    <source>
        <tissue evidence="3">Skin secretion</tissue>
    </source>
</reference>
<dbReference type="GO" id="GO:0005576">
    <property type="term" value="C:extracellular region"/>
    <property type="evidence" value="ECO:0007669"/>
    <property type="project" value="UniProtKB-SubCell"/>
</dbReference>
<dbReference type="GO" id="GO:0006952">
    <property type="term" value="P:defense response"/>
    <property type="evidence" value="ECO:0007669"/>
    <property type="project" value="UniProtKB-KW"/>
</dbReference>
<keyword id="KW-0878">Amphibian defense peptide</keyword>
<keyword id="KW-0929">Antimicrobial</keyword>
<keyword id="KW-0903">Direct protein sequencing</keyword>
<keyword id="KW-0964">Secreted</keyword>
<sequence>GVSKILHSAGKFGKAFLGEIMKS</sequence>
<accession>C0HKL6</accession>
<name>MGBM2_XENBM</name>
<evidence type="ECO:0000250" key="1">
    <source>
        <dbReference type="UniProtKB" id="C0HK84"/>
    </source>
</evidence>
<evidence type="ECO:0000269" key="2">
    <source>
    </source>
</evidence>
<evidence type="ECO:0000303" key="3">
    <source>
    </source>
</evidence>
<evidence type="ECO:0000305" key="4"/>
<evidence type="ECO:0000305" key="5">
    <source>
    </source>
</evidence>
<feature type="peptide" id="PRO_0000440793" description="Magainin-BM2" evidence="2">
    <location>
        <begin position="1"/>
        <end position="23"/>
    </location>
</feature>
<comment type="function">
    <text evidence="1">Antimicrobial peptide.</text>
</comment>
<comment type="subcellular location">
    <subcellularLocation>
        <location evidence="2">Secreted</location>
    </subcellularLocation>
</comment>
<comment type="tissue specificity">
    <text evidence="5">Expressed by the skin glands.</text>
</comment>
<comment type="mass spectrometry"/>
<comment type="similarity">
    <text evidence="4">Belongs to the gastrin/cholecystokinin family. Magainin subfamily.</text>
</comment>